<organism>
    <name type="scientific">Pseudomonas savastanoi pv. phaseolicola (strain 1448A / Race 6)</name>
    <name type="common">Pseudomonas syringae pv. phaseolicola (strain 1448A / Race 6)</name>
    <dbReference type="NCBI Taxonomy" id="264730"/>
    <lineage>
        <taxon>Bacteria</taxon>
        <taxon>Pseudomonadati</taxon>
        <taxon>Pseudomonadota</taxon>
        <taxon>Gammaproteobacteria</taxon>
        <taxon>Pseudomonadales</taxon>
        <taxon>Pseudomonadaceae</taxon>
        <taxon>Pseudomonas</taxon>
    </lineage>
</organism>
<evidence type="ECO:0000255" key="1">
    <source>
        <dbReference type="HAMAP-Rule" id="MF_01844"/>
    </source>
</evidence>
<name>NHAA2_PSE14</name>
<comment type="function">
    <text evidence="1">Na(+)/H(+) antiporter that extrudes sodium in exchange for external protons.</text>
</comment>
<comment type="catalytic activity">
    <reaction evidence="1">
        <text>Na(+)(in) + 2 H(+)(out) = Na(+)(out) + 2 H(+)(in)</text>
        <dbReference type="Rhea" id="RHEA:29251"/>
        <dbReference type="ChEBI" id="CHEBI:15378"/>
        <dbReference type="ChEBI" id="CHEBI:29101"/>
    </reaction>
    <physiologicalReaction direction="left-to-right" evidence="1">
        <dbReference type="Rhea" id="RHEA:29252"/>
    </physiologicalReaction>
</comment>
<comment type="subcellular location">
    <subcellularLocation>
        <location evidence="1">Cell inner membrane</location>
        <topology evidence="1">Multi-pass membrane protein</topology>
    </subcellularLocation>
</comment>
<comment type="similarity">
    <text evidence="1">Belongs to the NhaA Na(+)/H(+) (TC 2.A.33) antiporter family.</text>
</comment>
<keyword id="KW-0050">Antiport</keyword>
<keyword id="KW-0997">Cell inner membrane</keyword>
<keyword id="KW-1003">Cell membrane</keyword>
<keyword id="KW-0406">Ion transport</keyword>
<keyword id="KW-0472">Membrane</keyword>
<keyword id="KW-0915">Sodium</keyword>
<keyword id="KW-0739">Sodium transport</keyword>
<keyword id="KW-0812">Transmembrane</keyword>
<keyword id="KW-1133">Transmembrane helix</keyword>
<keyword id="KW-0813">Transport</keyword>
<proteinExistence type="inferred from homology"/>
<gene>
    <name evidence="1" type="primary">nhaA2</name>
    <name type="ordered locus">PSPPH_4232</name>
</gene>
<sequence length="392" mass="40771">MHNPTPRTESPSALAFIKRFFAAEAAGGLILMAAALAALIVANSPLADSYFAALHTVLAGMSVEHWINDGLMAIFFMLVGLEIKREMLAGQLASWSQRALPGFAALGGMVVPALIYVAFNWGQPDTIGGWAIPAATDIAFALGVLSLLGKRVPLSLKIFLSALAILDDLGAVLIIALFYTSDLSIPMLLAALGSIAVLVALNRLSVKKLLPYLIVGALLWFFMLQSGIHATLAGVALALCIPLGKPDEEASSPLLHLEEKLHPWVAFAVVPVFGFANAGVSLSGITVDKLLDPVPLGVALGLLIGKQVGIFALAALAIRAGLARLPDGSNWGQLYGVAALCGIGFTMSLFIGALAFPGAPELVDEVKVGVLIGSVLSALLGVVVLRRFGARG</sequence>
<reference key="1">
    <citation type="journal article" date="2005" name="J. Bacteriol.">
        <title>Whole-genome sequence analysis of Pseudomonas syringae pv. phaseolicola 1448A reveals divergence among pathovars in genes involved in virulence and transposition.</title>
        <authorList>
            <person name="Joardar V."/>
            <person name="Lindeberg M."/>
            <person name="Jackson R.W."/>
            <person name="Selengut J."/>
            <person name="Dodson R."/>
            <person name="Brinkac L.M."/>
            <person name="Daugherty S.C."/>
            <person name="DeBoy R.T."/>
            <person name="Durkin A.S."/>
            <person name="Gwinn Giglio M."/>
            <person name="Madupu R."/>
            <person name="Nelson W.C."/>
            <person name="Rosovitz M.J."/>
            <person name="Sullivan S.A."/>
            <person name="Crabtree J."/>
            <person name="Creasy T."/>
            <person name="Davidsen T.M."/>
            <person name="Haft D.H."/>
            <person name="Zafar N."/>
            <person name="Zhou L."/>
            <person name="Halpin R."/>
            <person name="Holley T."/>
            <person name="Khouri H.M."/>
            <person name="Feldblyum T.V."/>
            <person name="White O."/>
            <person name="Fraser C.M."/>
            <person name="Chatterjee A.K."/>
            <person name="Cartinhour S."/>
            <person name="Schneider D."/>
            <person name="Mansfield J.W."/>
            <person name="Collmer A."/>
            <person name="Buell R."/>
        </authorList>
    </citation>
    <scope>NUCLEOTIDE SEQUENCE [LARGE SCALE GENOMIC DNA]</scope>
    <source>
        <strain>1448A / Race 6</strain>
    </source>
</reference>
<feature type="chain" id="PRO_0000334376" description="Na(+)/H(+) antiporter NhaA 2">
    <location>
        <begin position="1"/>
        <end position="392"/>
    </location>
</feature>
<feature type="transmembrane region" description="Helical" evidence="1">
    <location>
        <begin position="20"/>
        <end position="40"/>
    </location>
</feature>
<feature type="transmembrane region" description="Helical" evidence="1">
    <location>
        <begin position="63"/>
        <end position="83"/>
    </location>
</feature>
<feature type="transmembrane region" description="Helical" evidence="1">
    <location>
        <begin position="99"/>
        <end position="119"/>
    </location>
</feature>
<feature type="transmembrane region" description="Helical" evidence="1">
    <location>
        <begin position="127"/>
        <end position="147"/>
    </location>
</feature>
<feature type="transmembrane region" description="Helical" evidence="1">
    <location>
        <begin position="158"/>
        <end position="178"/>
    </location>
</feature>
<feature type="transmembrane region" description="Helical" evidence="1">
    <location>
        <begin position="181"/>
        <end position="201"/>
    </location>
</feature>
<feature type="transmembrane region" description="Helical" evidence="1">
    <location>
        <begin position="209"/>
        <end position="229"/>
    </location>
</feature>
<feature type="transmembrane region" description="Helical" evidence="1">
    <location>
        <begin position="265"/>
        <end position="285"/>
    </location>
</feature>
<feature type="transmembrane region" description="Helical" evidence="1">
    <location>
        <begin position="298"/>
        <end position="318"/>
    </location>
</feature>
<feature type="transmembrane region" description="Helical" evidence="1">
    <location>
        <begin position="336"/>
        <end position="356"/>
    </location>
</feature>
<feature type="transmembrane region" description="Helical" evidence="1">
    <location>
        <begin position="365"/>
        <end position="385"/>
    </location>
</feature>
<protein>
    <recommendedName>
        <fullName evidence="1">Na(+)/H(+) antiporter NhaA 2</fullName>
    </recommendedName>
    <alternativeName>
        <fullName evidence="1">Sodium/proton antiporter NhaA 2</fullName>
    </alternativeName>
</protein>
<dbReference type="EMBL" id="CP000058">
    <property type="protein sequence ID" value="AAZ37281.1"/>
    <property type="molecule type" value="Genomic_DNA"/>
</dbReference>
<dbReference type="SMR" id="Q48E39"/>
<dbReference type="KEGG" id="psp:PSPPH_4232"/>
<dbReference type="eggNOG" id="COG3004">
    <property type="taxonomic scope" value="Bacteria"/>
</dbReference>
<dbReference type="HOGENOM" id="CLU_015803_1_0_6"/>
<dbReference type="Proteomes" id="UP000000551">
    <property type="component" value="Chromosome"/>
</dbReference>
<dbReference type="GO" id="GO:0005886">
    <property type="term" value="C:plasma membrane"/>
    <property type="evidence" value="ECO:0007669"/>
    <property type="project" value="UniProtKB-SubCell"/>
</dbReference>
<dbReference type="GO" id="GO:0015385">
    <property type="term" value="F:sodium:proton antiporter activity"/>
    <property type="evidence" value="ECO:0007669"/>
    <property type="project" value="TreeGrafter"/>
</dbReference>
<dbReference type="GO" id="GO:0006885">
    <property type="term" value="P:regulation of pH"/>
    <property type="evidence" value="ECO:0007669"/>
    <property type="project" value="InterPro"/>
</dbReference>
<dbReference type="Gene3D" id="1.20.1530.10">
    <property type="entry name" value="Na+/H+ antiporter like domain"/>
    <property type="match status" value="1"/>
</dbReference>
<dbReference type="HAMAP" id="MF_01844">
    <property type="entry name" value="NhaA"/>
    <property type="match status" value="1"/>
</dbReference>
<dbReference type="InterPro" id="IPR023171">
    <property type="entry name" value="Na/H_antiporter_dom_sf"/>
</dbReference>
<dbReference type="InterPro" id="IPR004670">
    <property type="entry name" value="NhaA"/>
</dbReference>
<dbReference type="NCBIfam" id="TIGR00773">
    <property type="entry name" value="NhaA"/>
    <property type="match status" value="1"/>
</dbReference>
<dbReference type="NCBIfam" id="NF007111">
    <property type="entry name" value="PRK09560.1"/>
    <property type="match status" value="1"/>
</dbReference>
<dbReference type="NCBIfam" id="NF007112">
    <property type="entry name" value="PRK09561.1"/>
    <property type="match status" value="1"/>
</dbReference>
<dbReference type="PANTHER" id="PTHR30341:SF0">
    <property type="entry name" value="NA(+)_H(+) ANTIPORTER NHAA"/>
    <property type="match status" value="1"/>
</dbReference>
<dbReference type="PANTHER" id="PTHR30341">
    <property type="entry name" value="SODIUM ION/PROTON ANTIPORTER NHAA-RELATED"/>
    <property type="match status" value="1"/>
</dbReference>
<dbReference type="Pfam" id="PF06965">
    <property type="entry name" value="Na_H_antiport_1"/>
    <property type="match status" value="1"/>
</dbReference>
<accession>Q48E39</accession>